<feature type="chain" id="PRO_0000191908" description="Transketolase 10">
    <location>
        <begin position="1"/>
        <end position="679"/>
    </location>
</feature>
<feature type="active site" description="Proton donor" evidence="1">
    <location>
        <position position="425"/>
    </location>
</feature>
<feature type="binding site" evidence="1">
    <location>
        <position position="40"/>
    </location>
    <ligand>
        <name>substrate</name>
    </ligand>
</feature>
<feature type="binding site" evidence="1">
    <location>
        <position position="80"/>
    </location>
    <ligand>
        <name>thiamine diphosphate</name>
        <dbReference type="ChEBI" id="CHEBI:58937"/>
    </ligand>
</feature>
<feature type="binding site" evidence="1">
    <location>
        <begin position="129"/>
        <end position="131"/>
    </location>
    <ligand>
        <name>thiamine diphosphate</name>
        <dbReference type="ChEBI" id="CHEBI:58937"/>
    </ligand>
</feature>
<feature type="binding site" evidence="1">
    <location>
        <position position="170"/>
    </location>
    <ligand>
        <name>Mg(2+)</name>
        <dbReference type="ChEBI" id="CHEBI:18420"/>
    </ligand>
</feature>
<feature type="binding site" evidence="1">
    <location>
        <position position="171"/>
    </location>
    <ligand>
        <name>thiamine diphosphate</name>
        <dbReference type="ChEBI" id="CHEBI:58937"/>
    </ligand>
</feature>
<feature type="binding site" evidence="1">
    <location>
        <position position="200"/>
    </location>
    <ligand>
        <name>Mg(2+)</name>
        <dbReference type="ChEBI" id="CHEBI:18420"/>
    </ligand>
</feature>
<feature type="binding site" evidence="1">
    <location>
        <position position="200"/>
    </location>
    <ligand>
        <name>thiamine diphosphate</name>
        <dbReference type="ChEBI" id="CHEBI:58937"/>
    </ligand>
</feature>
<feature type="binding site" evidence="1">
    <location>
        <position position="202"/>
    </location>
    <ligand>
        <name>Mg(2+)</name>
        <dbReference type="ChEBI" id="CHEBI:18420"/>
    </ligand>
</feature>
<feature type="binding site" evidence="1">
    <location>
        <position position="277"/>
    </location>
    <ligand>
        <name>substrate</name>
    </ligand>
</feature>
<feature type="binding site" evidence="1">
    <location>
        <position position="277"/>
    </location>
    <ligand>
        <name>thiamine diphosphate</name>
        <dbReference type="ChEBI" id="CHEBI:58937"/>
    </ligand>
</feature>
<feature type="binding site" evidence="1">
    <location>
        <position position="371"/>
    </location>
    <ligand>
        <name>substrate</name>
    </ligand>
</feature>
<feature type="binding site" evidence="1">
    <location>
        <position position="398"/>
    </location>
    <ligand>
        <name>substrate</name>
    </ligand>
</feature>
<feature type="binding site" evidence="1">
    <location>
        <position position="425"/>
    </location>
    <ligand>
        <name>thiamine diphosphate</name>
        <dbReference type="ChEBI" id="CHEBI:58937"/>
    </ligand>
</feature>
<feature type="binding site" evidence="1">
    <location>
        <position position="452"/>
    </location>
    <ligand>
        <name>thiamine diphosphate</name>
        <dbReference type="ChEBI" id="CHEBI:58937"/>
    </ligand>
</feature>
<feature type="binding site" evidence="1">
    <location>
        <position position="476"/>
    </location>
    <ligand>
        <name>substrate</name>
    </ligand>
</feature>
<feature type="binding site" evidence="1">
    <location>
        <position position="484"/>
    </location>
    <ligand>
        <name>substrate</name>
    </ligand>
</feature>
<feature type="binding site" evidence="1">
    <location>
        <position position="535"/>
    </location>
    <ligand>
        <name>substrate</name>
    </ligand>
</feature>
<feature type="site" description="Important for catalytic activity" evidence="1">
    <location>
        <position position="40"/>
    </location>
</feature>
<feature type="site" description="Important for catalytic activity" evidence="1">
    <location>
        <position position="277"/>
    </location>
</feature>
<name>TKTA_CRAPL</name>
<reference key="1">
    <citation type="journal article" date="1995" name="EMBO J.">
        <title>The transketolase gene family of the resurrection plant Craterostigma plantagineum: differential expression during the rehydration phase.</title>
        <authorList>
            <person name="Bernacchia G."/>
            <person name="Schwall G."/>
            <person name="Lottspeich F."/>
            <person name="Salamini F."/>
            <person name="Bartels D."/>
        </authorList>
    </citation>
    <scope>NUCLEOTIDE SEQUENCE [MRNA]</scope>
</reference>
<sequence length="679" mass="73130">MAKTTPSSPSAAAAAELVVKSVNTIRFLAIDAVENVKSGHPGMPMGCAPMGHVLFDEFMKFNPKNPYWFNRDRFVLSAGHGAMLLYGLLHLAGYDSVKVEDLKGLRQWGSKTPAHPENFETPGVEVTTGPLGQGVGSAVGLALAEKHLGARYNKPDFEMVDHYTYMILGDGCQMEGISNEASSLAAHWGLGKLIALYDDNHITIDGDTDLAFTEDVGKRFEALGWHVLTVANGNDGYDEIREAIKVAKSVTDKPTLIKVATTIGFGSPNKANTYGVHGNALGPKEAEATRQNLGWPYETFHVPDDVKKHWSRHISEGAELESAWNAKFAEYEKKYPKEAAELKSIITGELPLGWEKALPTYTPESPGNPTRTLSHQNLNAVAAVLPGLIGGSADLTASNMAFLKSSGDFQKETPTGRNLKFGAREHGMGAICNGVALHSPGLVPFSATYFVFTDYMRAAIRIAALSKARVVYIMTHDSIGLGEDGPTHQPVEHLASFRAMPNILVLRPADGNETAGAYKVAVENAGRPSILSLSRQKLPQLPGTSVEGVGRGGYVISDNSKDGEKPEVILMGTGSELEIAARAGEELRKEGKKVRVVSLVSWELFGEQSKEYKEMVLPSEVTARVSVEAGSTFGWERFVGLKGRAVGIDRFGASASAERLYKEFGITVEAVVAAAKELC</sequence>
<proteinExistence type="evidence at transcript level"/>
<gene>
    <name type="primary">TKT10</name>
</gene>
<evidence type="ECO:0000250" key="1"/>
<evidence type="ECO:0000305" key="2"/>
<keyword id="KW-0106">Calcium</keyword>
<keyword id="KW-0460">Magnesium</keyword>
<keyword id="KW-0479">Metal-binding</keyword>
<keyword id="KW-0786">Thiamine pyrophosphate</keyword>
<keyword id="KW-0808">Transferase</keyword>
<organism>
    <name type="scientific">Craterostigma plantagineum</name>
    <name type="common">Blue gem</name>
    <name type="synonym">Torenia plantagineum</name>
    <dbReference type="NCBI Taxonomy" id="4153"/>
    <lineage>
        <taxon>Eukaryota</taxon>
        <taxon>Viridiplantae</taxon>
        <taxon>Streptophyta</taxon>
        <taxon>Embryophyta</taxon>
        <taxon>Tracheophyta</taxon>
        <taxon>Spermatophyta</taxon>
        <taxon>Magnoliopsida</taxon>
        <taxon>eudicotyledons</taxon>
        <taxon>Gunneridae</taxon>
        <taxon>Pentapetalae</taxon>
        <taxon>asterids</taxon>
        <taxon>lamiids</taxon>
        <taxon>Lamiales</taxon>
        <taxon>Linderniaceae</taxon>
        <taxon>Craterostigma</taxon>
    </lineage>
</organism>
<dbReference type="EC" id="2.2.1.1"/>
<dbReference type="EMBL" id="Z46647">
    <property type="protein sequence ID" value="CAA86608.1"/>
    <property type="molecule type" value="mRNA"/>
</dbReference>
<dbReference type="PIR" id="S54299">
    <property type="entry name" value="S54299"/>
</dbReference>
<dbReference type="SMR" id="Q42675"/>
<dbReference type="GO" id="GO:0005829">
    <property type="term" value="C:cytosol"/>
    <property type="evidence" value="ECO:0007669"/>
    <property type="project" value="TreeGrafter"/>
</dbReference>
<dbReference type="GO" id="GO:0046872">
    <property type="term" value="F:metal ion binding"/>
    <property type="evidence" value="ECO:0007669"/>
    <property type="project" value="UniProtKB-KW"/>
</dbReference>
<dbReference type="GO" id="GO:0004802">
    <property type="term" value="F:transketolase activity"/>
    <property type="evidence" value="ECO:0007669"/>
    <property type="project" value="UniProtKB-EC"/>
</dbReference>
<dbReference type="GO" id="GO:0006098">
    <property type="term" value="P:pentose-phosphate shunt"/>
    <property type="evidence" value="ECO:0007669"/>
    <property type="project" value="TreeGrafter"/>
</dbReference>
<dbReference type="CDD" id="cd07033">
    <property type="entry name" value="TPP_PYR_DXS_TK_like"/>
    <property type="match status" value="1"/>
</dbReference>
<dbReference type="CDD" id="cd02012">
    <property type="entry name" value="TPP_TK"/>
    <property type="match status" value="1"/>
</dbReference>
<dbReference type="FunFam" id="3.40.50.920:FF:000003">
    <property type="entry name" value="Transketolase"/>
    <property type="match status" value="1"/>
</dbReference>
<dbReference type="FunFam" id="3.40.50.970:FF:000003">
    <property type="entry name" value="Transketolase"/>
    <property type="match status" value="1"/>
</dbReference>
<dbReference type="FunFam" id="3.40.50.970:FF:000004">
    <property type="entry name" value="Transketolase"/>
    <property type="match status" value="1"/>
</dbReference>
<dbReference type="Gene3D" id="3.40.50.920">
    <property type="match status" value="1"/>
</dbReference>
<dbReference type="Gene3D" id="3.40.50.970">
    <property type="match status" value="2"/>
</dbReference>
<dbReference type="InterPro" id="IPR029061">
    <property type="entry name" value="THDP-binding"/>
</dbReference>
<dbReference type="InterPro" id="IPR009014">
    <property type="entry name" value="Transketo_C/PFOR_II"/>
</dbReference>
<dbReference type="InterPro" id="IPR055152">
    <property type="entry name" value="Transketolase-like_C_2"/>
</dbReference>
<dbReference type="InterPro" id="IPR005475">
    <property type="entry name" value="Transketolase-like_Pyr-bd"/>
</dbReference>
<dbReference type="InterPro" id="IPR005478">
    <property type="entry name" value="Transketolase_bac-like"/>
</dbReference>
<dbReference type="InterPro" id="IPR020826">
    <property type="entry name" value="Transketolase_BS"/>
</dbReference>
<dbReference type="InterPro" id="IPR049557">
    <property type="entry name" value="Transketolase_CS"/>
</dbReference>
<dbReference type="InterPro" id="IPR033247">
    <property type="entry name" value="Transketolase_fam"/>
</dbReference>
<dbReference type="InterPro" id="IPR005474">
    <property type="entry name" value="Transketolase_N"/>
</dbReference>
<dbReference type="NCBIfam" id="TIGR00232">
    <property type="entry name" value="tktlase_bact"/>
    <property type="match status" value="1"/>
</dbReference>
<dbReference type="PANTHER" id="PTHR43522">
    <property type="entry name" value="TRANSKETOLASE"/>
    <property type="match status" value="1"/>
</dbReference>
<dbReference type="PANTHER" id="PTHR43522:SF2">
    <property type="entry name" value="TRANSKETOLASE 1-RELATED"/>
    <property type="match status" value="1"/>
</dbReference>
<dbReference type="Pfam" id="PF02779">
    <property type="entry name" value="Transket_pyr"/>
    <property type="match status" value="1"/>
</dbReference>
<dbReference type="Pfam" id="PF22613">
    <property type="entry name" value="Transketolase_C_1"/>
    <property type="match status" value="1"/>
</dbReference>
<dbReference type="Pfam" id="PF00456">
    <property type="entry name" value="Transketolase_N"/>
    <property type="match status" value="1"/>
</dbReference>
<dbReference type="SMART" id="SM00861">
    <property type="entry name" value="Transket_pyr"/>
    <property type="match status" value="1"/>
</dbReference>
<dbReference type="SUPFAM" id="SSF52518">
    <property type="entry name" value="Thiamin diphosphate-binding fold (THDP-binding)"/>
    <property type="match status" value="2"/>
</dbReference>
<dbReference type="SUPFAM" id="SSF52922">
    <property type="entry name" value="TK C-terminal domain-like"/>
    <property type="match status" value="1"/>
</dbReference>
<dbReference type="PROSITE" id="PS00801">
    <property type="entry name" value="TRANSKETOLASE_1"/>
    <property type="match status" value="1"/>
</dbReference>
<dbReference type="PROSITE" id="PS00802">
    <property type="entry name" value="TRANSKETOLASE_2"/>
    <property type="match status" value="1"/>
</dbReference>
<accession>Q42675</accession>
<protein>
    <recommendedName>
        <fullName>Transketolase 10</fullName>
        <shortName>TK</shortName>
        <ecNumber>2.2.1.1</ecNumber>
    </recommendedName>
</protein>
<comment type="function">
    <text>Could be involved in the conversion of sugars, which are a major phenomenon in the rehydration process.</text>
</comment>
<comment type="function">
    <text evidence="1">Catalyzes the transfer of a two-carbon ketol group from a ketose donor to an aldose acceptor, via a covalent intermediate with the cofactor thiamine pyrophosphate.</text>
</comment>
<comment type="catalytic activity">
    <reaction>
        <text>D-sedoheptulose 7-phosphate + D-glyceraldehyde 3-phosphate = aldehydo-D-ribose 5-phosphate + D-xylulose 5-phosphate</text>
        <dbReference type="Rhea" id="RHEA:10508"/>
        <dbReference type="ChEBI" id="CHEBI:57483"/>
        <dbReference type="ChEBI" id="CHEBI:57737"/>
        <dbReference type="ChEBI" id="CHEBI:58273"/>
        <dbReference type="ChEBI" id="CHEBI:59776"/>
        <dbReference type="EC" id="2.2.1.1"/>
    </reaction>
</comment>
<comment type="cofactor">
    <cofactor evidence="1">
        <name>Mg(2+)</name>
        <dbReference type="ChEBI" id="CHEBI:18420"/>
    </cofactor>
    <cofactor evidence="1">
        <name>Ca(2+)</name>
        <dbReference type="ChEBI" id="CHEBI:29108"/>
    </cofactor>
    <cofactor evidence="1">
        <name>Mn(2+)</name>
        <dbReference type="ChEBI" id="CHEBI:29035"/>
    </cofactor>
    <cofactor evidence="1">
        <name>Co(2+)</name>
        <dbReference type="ChEBI" id="CHEBI:48828"/>
    </cofactor>
    <text evidence="1">Binds 1 Mg(2+) ion per subunit. Can also utilize other divalent metal cations, such as Ca(2+), Mn(2+) and Co(2+).</text>
</comment>
<comment type="cofactor">
    <cofactor evidence="1">
        <name>thiamine diphosphate</name>
        <dbReference type="ChEBI" id="CHEBI:58937"/>
    </cofactor>
    <text evidence="1">Binds 1 thiamine pyrophosphate per subunit.</text>
</comment>
<comment type="subunit">
    <text evidence="1">Homodimer.</text>
</comment>
<comment type="tissue specificity">
    <text>Leaves.</text>
</comment>
<comment type="induction">
    <text>By rehydration.</text>
</comment>
<comment type="similarity">
    <text evidence="2">Belongs to the transketolase family.</text>
</comment>